<proteinExistence type="evidence at transcript level"/>
<accession>P0DOP2</accession>
<accession>P33832</accession>
<reference key="1">
    <citation type="journal article" date="1993" name="Nature">
        <title>Potential virulence determinants in terminal regions of variola smallpox virus genome.</title>
        <authorList>
            <person name="Massung R.F."/>
            <person name="Esposito J.J."/>
            <person name="Liu L.I."/>
            <person name="Qi J."/>
            <person name="Utterback T.R."/>
            <person name="Knight J.C."/>
            <person name="Aubin L."/>
            <person name="Yuran T.E."/>
            <person name="Parsons J.M."/>
            <person name="Loparev V.N."/>
            <person name="Selivanov N.A."/>
            <person name="Cavallaro K.F."/>
            <person name="Kerlavage A.R."/>
            <person name="Mahy B.W.J."/>
            <person name="Venter J.C."/>
        </authorList>
    </citation>
    <scope>NUCLEOTIDE SEQUENCE [GENOMIC DNA]</scope>
    <source>
        <strain>Bangladesh-1975</strain>
    </source>
</reference>
<gene>
    <name type="primary">OPG130</name>
    <name type="ORF">A4L</name>
</gene>
<sequence>MDFFNKFSQGLAESSTPKSSIYYSEEKDLDIKKDEAIEIGLKSQESYYQRQLREQLARDNMMAASRQPIQPLQPTIHITPLQVPTPAPTPKPRQQQTNTSSDMSNLFDWLSADDNTQPSSLLPALTPINAVQDIISKFNKDQKTTTTPSTQPSQTLPTTTCTQQSDGSISCTTPTVTPPQPPIVATVCTPTPTGGTVCTTAQQNPNPGATSQQNLDNMALKDLMSSVEKDMRQLQAETNDLVTNVYDAREYTRRAIDQILQLVKGFERFQK</sequence>
<protein>
    <recommendedName>
        <fullName>39kDa core protein OPG130</fullName>
        <shortName>p39</shortName>
    </recommendedName>
    <alternativeName>
        <fullName>Protein A4</fullName>
    </alternativeName>
</protein>
<evidence type="ECO:0000250" key="1">
    <source>
        <dbReference type="UniProtKB" id="P29191"/>
    </source>
</evidence>
<evidence type="ECO:0000256" key="2">
    <source>
        <dbReference type="SAM" id="MobiDB-lite"/>
    </source>
</evidence>
<evidence type="ECO:0000305" key="3"/>
<comment type="function">
    <text evidence="1">Component of the virion core. Participates in virion assembly.</text>
</comment>
<comment type="subunit">
    <text evidence="1">Interacts with OPG136 and its cleaved form.</text>
</comment>
<comment type="subcellular location">
    <subcellularLocation>
        <location evidence="1">Virion</location>
    </subcellularLocation>
    <subcellularLocation>
        <location evidence="1">Host endoplasmic reticulum-Golgi intermediate compartment membrane</location>
    </subcellularLocation>
    <text evidence="1">Localizes between the core and the membrane; might surround the outer core wall like a palisade (spikes).</text>
</comment>
<comment type="induction">
    <text>Expressed in the late phase of the viral replicative cycle.</text>
</comment>
<comment type="PTM">
    <text evidence="1">Its phosphorylation state is regulated by the OPG054 kinase and the OPG106 phosphatase.</text>
</comment>
<comment type="similarity">
    <text evidence="3">Belongs to the orthopoxvirus OPG130 family.</text>
</comment>
<organism>
    <name type="scientific">Variola virus</name>
    <dbReference type="NCBI Taxonomy" id="10255"/>
    <lineage>
        <taxon>Viruses</taxon>
        <taxon>Varidnaviria</taxon>
        <taxon>Bamfordvirae</taxon>
        <taxon>Nucleocytoviricota</taxon>
        <taxon>Pokkesviricetes</taxon>
        <taxon>Chitovirales</taxon>
        <taxon>Poxviridae</taxon>
        <taxon>Chordopoxvirinae</taxon>
        <taxon>Orthopoxvirus</taxon>
    </lineage>
</organism>
<dbReference type="EMBL" id="L22579">
    <property type="protein sequence ID" value="AAA60856.1"/>
    <property type="molecule type" value="Genomic_DNA"/>
</dbReference>
<dbReference type="PIR" id="T28546">
    <property type="entry name" value="T28546"/>
</dbReference>
<dbReference type="RefSeq" id="NP_042152.1">
    <property type="nucleotide sequence ID" value="NC_001611.1"/>
</dbReference>
<dbReference type="SMR" id="P0DOP2"/>
<dbReference type="GeneID" id="1486531"/>
<dbReference type="KEGG" id="vg:1486531"/>
<dbReference type="Proteomes" id="UP000119805">
    <property type="component" value="Segment"/>
</dbReference>
<dbReference type="GO" id="GO:0044173">
    <property type="term" value="C:host cell endoplasmic reticulum-Golgi intermediate compartment membrane"/>
    <property type="evidence" value="ECO:0007669"/>
    <property type="project" value="UniProtKB-SubCell"/>
</dbReference>
<dbReference type="GO" id="GO:0016020">
    <property type="term" value="C:membrane"/>
    <property type="evidence" value="ECO:0007669"/>
    <property type="project" value="UniProtKB-KW"/>
</dbReference>
<dbReference type="GO" id="GO:0044423">
    <property type="term" value="C:virion component"/>
    <property type="evidence" value="ECO:0007669"/>
    <property type="project" value="UniProtKB-KW"/>
</dbReference>
<dbReference type="InterPro" id="IPR010396">
    <property type="entry name" value="Poxvirus_A4L"/>
</dbReference>
<dbReference type="Pfam" id="PF06193">
    <property type="entry name" value="Orthopox_A5L"/>
    <property type="match status" value="1"/>
</dbReference>
<organismHost>
    <name type="scientific">Homo sapiens</name>
    <name type="common">Human</name>
    <dbReference type="NCBI Taxonomy" id="9606"/>
</organismHost>
<keyword id="KW-1043">Host membrane</keyword>
<keyword id="KW-0426">Late protein</keyword>
<keyword id="KW-0472">Membrane</keyword>
<keyword id="KW-0946">Virion</keyword>
<name>PG130_VARV</name>
<feature type="chain" id="PRO_0000448149" description="39kDa core protein OPG130">
    <location>
        <begin position="1"/>
        <end position="271"/>
    </location>
</feature>
<feature type="region of interest" description="Disordered" evidence="2">
    <location>
        <begin position="80"/>
        <end position="101"/>
    </location>
</feature>
<feature type="region of interest" description="Disordered" evidence="2">
    <location>
        <begin position="140"/>
        <end position="180"/>
    </location>
</feature>
<feature type="compositionally biased region" description="Polar residues" evidence="2">
    <location>
        <begin position="92"/>
        <end position="101"/>
    </location>
</feature>
<feature type="compositionally biased region" description="Low complexity" evidence="2">
    <location>
        <begin position="144"/>
        <end position="165"/>
    </location>
</feature>